<name>TRPF_BRUA1</name>
<keyword id="KW-0028">Amino-acid biosynthesis</keyword>
<keyword id="KW-0057">Aromatic amino acid biosynthesis</keyword>
<keyword id="KW-0413">Isomerase</keyword>
<keyword id="KW-0822">Tryptophan biosynthesis</keyword>
<feature type="chain" id="PRO_1000095914" description="N-(5'-phosphoribosyl)anthranilate isomerase">
    <location>
        <begin position="1"/>
        <end position="222"/>
    </location>
</feature>
<accession>B2S9A6</accession>
<dbReference type="EC" id="5.3.1.24" evidence="1"/>
<dbReference type="EMBL" id="CP000887">
    <property type="protein sequence ID" value="ACD73458.1"/>
    <property type="molecule type" value="Genomic_DNA"/>
</dbReference>
<dbReference type="RefSeq" id="WP_002965175.1">
    <property type="nucleotide sequence ID" value="NC_010742.1"/>
</dbReference>
<dbReference type="SMR" id="B2S9A6"/>
<dbReference type="KEGG" id="bmc:BAbS19_I19760"/>
<dbReference type="HOGENOM" id="CLU_076364_1_1_5"/>
<dbReference type="UniPathway" id="UPA00035">
    <property type="reaction ID" value="UER00042"/>
</dbReference>
<dbReference type="Proteomes" id="UP000002565">
    <property type="component" value="Chromosome 1"/>
</dbReference>
<dbReference type="GO" id="GO:0004640">
    <property type="term" value="F:phosphoribosylanthranilate isomerase activity"/>
    <property type="evidence" value="ECO:0007669"/>
    <property type="project" value="UniProtKB-UniRule"/>
</dbReference>
<dbReference type="GO" id="GO:0000162">
    <property type="term" value="P:L-tryptophan biosynthetic process"/>
    <property type="evidence" value="ECO:0007669"/>
    <property type="project" value="UniProtKB-UniRule"/>
</dbReference>
<dbReference type="CDD" id="cd00405">
    <property type="entry name" value="PRAI"/>
    <property type="match status" value="1"/>
</dbReference>
<dbReference type="Gene3D" id="3.20.20.70">
    <property type="entry name" value="Aldolase class I"/>
    <property type="match status" value="1"/>
</dbReference>
<dbReference type="HAMAP" id="MF_00135">
    <property type="entry name" value="PRAI"/>
    <property type="match status" value="1"/>
</dbReference>
<dbReference type="InterPro" id="IPR013785">
    <property type="entry name" value="Aldolase_TIM"/>
</dbReference>
<dbReference type="InterPro" id="IPR001240">
    <property type="entry name" value="PRAI_dom"/>
</dbReference>
<dbReference type="InterPro" id="IPR011060">
    <property type="entry name" value="RibuloseP-bd_barrel"/>
</dbReference>
<dbReference type="InterPro" id="IPR044643">
    <property type="entry name" value="TrpF_fam"/>
</dbReference>
<dbReference type="NCBIfam" id="NF002295">
    <property type="entry name" value="PRK01222.1-1"/>
    <property type="match status" value="1"/>
</dbReference>
<dbReference type="PANTHER" id="PTHR42894">
    <property type="entry name" value="N-(5'-PHOSPHORIBOSYL)ANTHRANILATE ISOMERASE"/>
    <property type="match status" value="1"/>
</dbReference>
<dbReference type="PANTHER" id="PTHR42894:SF1">
    <property type="entry name" value="N-(5'-PHOSPHORIBOSYL)ANTHRANILATE ISOMERASE"/>
    <property type="match status" value="1"/>
</dbReference>
<dbReference type="Pfam" id="PF00697">
    <property type="entry name" value="PRAI"/>
    <property type="match status" value="1"/>
</dbReference>
<dbReference type="SUPFAM" id="SSF51366">
    <property type="entry name" value="Ribulose-phoshate binding barrel"/>
    <property type="match status" value="1"/>
</dbReference>
<protein>
    <recommendedName>
        <fullName evidence="1">N-(5'-phosphoribosyl)anthranilate isomerase</fullName>
        <shortName evidence="1">PRAI</shortName>
        <ecNumber evidence="1">5.3.1.24</ecNumber>
    </recommendedName>
</protein>
<reference key="1">
    <citation type="journal article" date="2008" name="PLoS ONE">
        <title>Genome sequence of Brucella abortus vaccine strain S19 compared to virulent strains yields candidate virulence genes.</title>
        <authorList>
            <person name="Crasta O.R."/>
            <person name="Folkerts O."/>
            <person name="Fei Z."/>
            <person name="Mane S.P."/>
            <person name="Evans C."/>
            <person name="Martino-Catt S."/>
            <person name="Bricker B."/>
            <person name="Yu G."/>
            <person name="Du L."/>
            <person name="Sobral B.W."/>
        </authorList>
    </citation>
    <scope>NUCLEOTIDE SEQUENCE [LARGE SCALE GENOMIC DNA]</scope>
    <source>
        <strain>S19</strain>
    </source>
</reference>
<sequence length="222" mass="23614">MALDIKICGLKTPEAVAAALDGGATHIGFIFFPKSPRHITPDAAARLRAAATGRAVAVAVTVDADDEALDEIVKTVRPDMLQLHGGETPERVRFLKERYNLPVMKAFSIREAGDLEAIAPYRGIADRFLFDAKPPKGSELPGGNGISFDWNLLAALDADIDYMLSGGLNADNIAEALLKTGAPGIDISSGVECAPGEKDVRLIENFFQAVADANAQPFARRA</sequence>
<gene>
    <name evidence="1" type="primary">trpF</name>
    <name type="ordered locus">BAbS19_I19760</name>
</gene>
<evidence type="ECO:0000255" key="1">
    <source>
        <dbReference type="HAMAP-Rule" id="MF_00135"/>
    </source>
</evidence>
<comment type="catalytic activity">
    <reaction evidence="1">
        <text>N-(5-phospho-beta-D-ribosyl)anthranilate = 1-(2-carboxyphenylamino)-1-deoxy-D-ribulose 5-phosphate</text>
        <dbReference type="Rhea" id="RHEA:21540"/>
        <dbReference type="ChEBI" id="CHEBI:18277"/>
        <dbReference type="ChEBI" id="CHEBI:58613"/>
        <dbReference type="EC" id="5.3.1.24"/>
    </reaction>
</comment>
<comment type="pathway">
    <text evidence="1">Amino-acid biosynthesis; L-tryptophan biosynthesis; L-tryptophan from chorismate: step 3/5.</text>
</comment>
<comment type="similarity">
    <text evidence="1">Belongs to the TrpF family.</text>
</comment>
<proteinExistence type="inferred from homology"/>
<organism>
    <name type="scientific">Brucella abortus (strain S19)</name>
    <dbReference type="NCBI Taxonomy" id="430066"/>
    <lineage>
        <taxon>Bacteria</taxon>
        <taxon>Pseudomonadati</taxon>
        <taxon>Pseudomonadota</taxon>
        <taxon>Alphaproteobacteria</taxon>
        <taxon>Hyphomicrobiales</taxon>
        <taxon>Brucellaceae</taxon>
        <taxon>Brucella/Ochrobactrum group</taxon>
        <taxon>Brucella</taxon>
    </lineage>
</organism>